<organism>
    <name type="scientific">Yersinia enterocolitica serotype O:8 / biotype 1B (strain NCTC 13174 / 8081)</name>
    <dbReference type="NCBI Taxonomy" id="393305"/>
    <lineage>
        <taxon>Bacteria</taxon>
        <taxon>Pseudomonadati</taxon>
        <taxon>Pseudomonadota</taxon>
        <taxon>Gammaproteobacteria</taxon>
        <taxon>Enterobacterales</taxon>
        <taxon>Yersiniaceae</taxon>
        <taxon>Yersinia</taxon>
    </lineage>
</organism>
<name>DNLJ_YERE8</name>
<comment type="function">
    <text evidence="1">DNA ligase that catalyzes the formation of phosphodiester linkages between 5'-phosphoryl and 3'-hydroxyl groups in double-stranded DNA using NAD as a coenzyme and as the energy source for the reaction. It is essential for DNA replication and repair of damaged DNA.</text>
</comment>
<comment type="catalytic activity">
    <reaction evidence="1">
        <text>NAD(+) + (deoxyribonucleotide)n-3'-hydroxyl + 5'-phospho-(deoxyribonucleotide)m = (deoxyribonucleotide)n+m + AMP + beta-nicotinamide D-nucleotide.</text>
        <dbReference type="EC" id="6.5.1.2"/>
    </reaction>
</comment>
<comment type="cofactor">
    <cofactor evidence="1">
        <name>Mg(2+)</name>
        <dbReference type="ChEBI" id="CHEBI:18420"/>
    </cofactor>
    <cofactor evidence="1">
        <name>Mn(2+)</name>
        <dbReference type="ChEBI" id="CHEBI:29035"/>
    </cofactor>
</comment>
<comment type="similarity">
    <text evidence="1">Belongs to the NAD-dependent DNA ligase family. LigA subfamily.</text>
</comment>
<evidence type="ECO:0000255" key="1">
    <source>
        <dbReference type="HAMAP-Rule" id="MF_01588"/>
    </source>
</evidence>
<protein>
    <recommendedName>
        <fullName evidence="1">DNA ligase</fullName>
        <ecNumber evidence="1">6.5.1.2</ecNumber>
    </recommendedName>
    <alternativeName>
        <fullName evidence="1">Polydeoxyribonucleotide synthase [NAD(+)]</fullName>
    </alternativeName>
</protein>
<accession>A1JLA4</accession>
<proteinExistence type="inferred from homology"/>
<keyword id="KW-0227">DNA damage</keyword>
<keyword id="KW-0234">DNA repair</keyword>
<keyword id="KW-0235">DNA replication</keyword>
<keyword id="KW-0436">Ligase</keyword>
<keyword id="KW-0460">Magnesium</keyword>
<keyword id="KW-0464">Manganese</keyword>
<keyword id="KW-0479">Metal-binding</keyword>
<keyword id="KW-0520">NAD</keyword>
<keyword id="KW-0862">Zinc</keyword>
<dbReference type="EC" id="6.5.1.2" evidence="1"/>
<dbReference type="EMBL" id="AM286415">
    <property type="protein sequence ID" value="CAL11304.1"/>
    <property type="molecule type" value="Genomic_DNA"/>
</dbReference>
<dbReference type="RefSeq" id="WP_005172221.1">
    <property type="nucleotide sequence ID" value="NC_008800.1"/>
</dbReference>
<dbReference type="RefSeq" id="YP_001005536.1">
    <property type="nucleotide sequence ID" value="NC_008800.1"/>
</dbReference>
<dbReference type="SMR" id="A1JLA4"/>
<dbReference type="KEGG" id="yen:YE1211"/>
<dbReference type="PATRIC" id="fig|393305.7.peg.1315"/>
<dbReference type="eggNOG" id="COG0272">
    <property type="taxonomic scope" value="Bacteria"/>
</dbReference>
<dbReference type="HOGENOM" id="CLU_007764_2_1_6"/>
<dbReference type="OrthoDB" id="9759736at2"/>
<dbReference type="Proteomes" id="UP000000642">
    <property type="component" value="Chromosome"/>
</dbReference>
<dbReference type="GO" id="GO:0005829">
    <property type="term" value="C:cytosol"/>
    <property type="evidence" value="ECO:0007669"/>
    <property type="project" value="TreeGrafter"/>
</dbReference>
<dbReference type="GO" id="GO:0003677">
    <property type="term" value="F:DNA binding"/>
    <property type="evidence" value="ECO:0007669"/>
    <property type="project" value="InterPro"/>
</dbReference>
<dbReference type="GO" id="GO:0003911">
    <property type="term" value="F:DNA ligase (NAD+) activity"/>
    <property type="evidence" value="ECO:0007669"/>
    <property type="project" value="UniProtKB-UniRule"/>
</dbReference>
<dbReference type="GO" id="GO:0046872">
    <property type="term" value="F:metal ion binding"/>
    <property type="evidence" value="ECO:0007669"/>
    <property type="project" value="UniProtKB-KW"/>
</dbReference>
<dbReference type="GO" id="GO:0006281">
    <property type="term" value="P:DNA repair"/>
    <property type="evidence" value="ECO:0007669"/>
    <property type="project" value="UniProtKB-KW"/>
</dbReference>
<dbReference type="GO" id="GO:0006260">
    <property type="term" value="P:DNA replication"/>
    <property type="evidence" value="ECO:0007669"/>
    <property type="project" value="UniProtKB-KW"/>
</dbReference>
<dbReference type="CDD" id="cd17748">
    <property type="entry name" value="BRCT_DNA_ligase_like"/>
    <property type="match status" value="1"/>
</dbReference>
<dbReference type="CDD" id="cd00114">
    <property type="entry name" value="LIGANc"/>
    <property type="match status" value="1"/>
</dbReference>
<dbReference type="FunFam" id="1.10.150.20:FF:000006">
    <property type="entry name" value="DNA ligase"/>
    <property type="match status" value="1"/>
</dbReference>
<dbReference type="FunFam" id="1.10.150.20:FF:000007">
    <property type="entry name" value="DNA ligase"/>
    <property type="match status" value="1"/>
</dbReference>
<dbReference type="FunFam" id="1.10.287.610:FF:000002">
    <property type="entry name" value="DNA ligase"/>
    <property type="match status" value="1"/>
</dbReference>
<dbReference type="FunFam" id="2.40.50.140:FF:000012">
    <property type="entry name" value="DNA ligase"/>
    <property type="match status" value="1"/>
</dbReference>
<dbReference type="FunFam" id="3.30.470.30:FF:000001">
    <property type="entry name" value="DNA ligase"/>
    <property type="match status" value="1"/>
</dbReference>
<dbReference type="FunFam" id="3.40.50.10190:FF:000004">
    <property type="entry name" value="DNA ligase"/>
    <property type="match status" value="1"/>
</dbReference>
<dbReference type="FunFam" id="6.20.10.30:FF:000001">
    <property type="entry name" value="DNA ligase"/>
    <property type="match status" value="1"/>
</dbReference>
<dbReference type="Gene3D" id="6.20.10.30">
    <property type="match status" value="1"/>
</dbReference>
<dbReference type="Gene3D" id="1.10.150.20">
    <property type="entry name" value="5' to 3' exonuclease, C-terminal subdomain"/>
    <property type="match status" value="2"/>
</dbReference>
<dbReference type="Gene3D" id="3.40.50.10190">
    <property type="entry name" value="BRCT domain"/>
    <property type="match status" value="1"/>
</dbReference>
<dbReference type="Gene3D" id="3.30.470.30">
    <property type="entry name" value="DNA ligase/mRNA capping enzyme"/>
    <property type="match status" value="1"/>
</dbReference>
<dbReference type="Gene3D" id="1.10.287.610">
    <property type="entry name" value="Helix hairpin bin"/>
    <property type="match status" value="1"/>
</dbReference>
<dbReference type="Gene3D" id="2.40.50.140">
    <property type="entry name" value="Nucleic acid-binding proteins"/>
    <property type="match status" value="1"/>
</dbReference>
<dbReference type="HAMAP" id="MF_01588">
    <property type="entry name" value="DNA_ligase_A"/>
    <property type="match status" value="1"/>
</dbReference>
<dbReference type="InterPro" id="IPR001357">
    <property type="entry name" value="BRCT_dom"/>
</dbReference>
<dbReference type="InterPro" id="IPR036420">
    <property type="entry name" value="BRCT_dom_sf"/>
</dbReference>
<dbReference type="InterPro" id="IPR041663">
    <property type="entry name" value="DisA/LigA_HHH"/>
</dbReference>
<dbReference type="InterPro" id="IPR001679">
    <property type="entry name" value="DNA_ligase"/>
</dbReference>
<dbReference type="InterPro" id="IPR018239">
    <property type="entry name" value="DNA_ligase_AS"/>
</dbReference>
<dbReference type="InterPro" id="IPR033136">
    <property type="entry name" value="DNA_ligase_CS"/>
</dbReference>
<dbReference type="InterPro" id="IPR013839">
    <property type="entry name" value="DNAligase_adenylation"/>
</dbReference>
<dbReference type="InterPro" id="IPR013840">
    <property type="entry name" value="DNAligase_N"/>
</dbReference>
<dbReference type="InterPro" id="IPR003583">
    <property type="entry name" value="Hlx-hairpin-Hlx_DNA-bd_motif"/>
</dbReference>
<dbReference type="InterPro" id="IPR012340">
    <property type="entry name" value="NA-bd_OB-fold"/>
</dbReference>
<dbReference type="InterPro" id="IPR004150">
    <property type="entry name" value="NAD_DNA_ligase_OB"/>
</dbReference>
<dbReference type="InterPro" id="IPR010994">
    <property type="entry name" value="RuvA_2-like"/>
</dbReference>
<dbReference type="InterPro" id="IPR004149">
    <property type="entry name" value="Znf_DNAligase_C4"/>
</dbReference>
<dbReference type="NCBIfam" id="TIGR00575">
    <property type="entry name" value="dnlj"/>
    <property type="match status" value="1"/>
</dbReference>
<dbReference type="NCBIfam" id="NF005932">
    <property type="entry name" value="PRK07956.1"/>
    <property type="match status" value="1"/>
</dbReference>
<dbReference type="PANTHER" id="PTHR23389">
    <property type="entry name" value="CHROMOSOME TRANSMISSION FIDELITY FACTOR 18"/>
    <property type="match status" value="1"/>
</dbReference>
<dbReference type="PANTHER" id="PTHR23389:SF9">
    <property type="entry name" value="DNA LIGASE"/>
    <property type="match status" value="1"/>
</dbReference>
<dbReference type="Pfam" id="PF00533">
    <property type="entry name" value="BRCT"/>
    <property type="match status" value="1"/>
</dbReference>
<dbReference type="Pfam" id="PF01653">
    <property type="entry name" value="DNA_ligase_aden"/>
    <property type="match status" value="1"/>
</dbReference>
<dbReference type="Pfam" id="PF03120">
    <property type="entry name" value="DNA_ligase_OB"/>
    <property type="match status" value="1"/>
</dbReference>
<dbReference type="Pfam" id="PF03119">
    <property type="entry name" value="DNA_ligase_ZBD"/>
    <property type="match status" value="1"/>
</dbReference>
<dbReference type="Pfam" id="PF12826">
    <property type="entry name" value="HHH_2"/>
    <property type="match status" value="1"/>
</dbReference>
<dbReference type="Pfam" id="PF14520">
    <property type="entry name" value="HHH_5"/>
    <property type="match status" value="1"/>
</dbReference>
<dbReference type="Pfam" id="PF22745">
    <property type="entry name" value="Nlig-Ia"/>
    <property type="match status" value="1"/>
</dbReference>
<dbReference type="PIRSF" id="PIRSF001604">
    <property type="entry name" value="LigA"/>
    <property type="match status" value="1"/>
</dbReference>
<dbReference type="SMART" id="SM00292">
    <property type="entry name" value="BRCT"/>
    <property type="match status" value="1"/>
</dbReference>
<dbReference type="SMART" id="SM00278">
    <property type="entry name" value="HhH1"/>
    <property type="match status" value="4"/>
</dbReference>
<dbReference type="SMART" id="SM00532">
    <property type="entry name" value="LIGANc"/>
    <property type="match status" value="1"/>
</dbReference>
<dbReference type="SUPFAM" id="SSF52113">
    <property type="entry name" value="BRCT domain"/>
    <property type="match status" value="1"/>
</dbReference>
<dbReference type="SUPFAM" id="SSF56091">
    <property type="entry name" value="DNA ligase/mRNA capping enzyme, catalytic domain"/>
    <property type="match status" value="1"/>
</dbReference>
<dbReference type="SUPFAM" id="SSF50249">
    <property type="entry name" value="Nucleic acid-binding proteins"/>
    <property type="match status" value="1"/>
</dbReference>
<dbReference type="SUPFAM" id="SSF47781">
    <property type="entry name" value="RuvA domain 2-like"/>
    <property type="match status" value="1"/>
</dbReference>
<dbReference type="PROSITE" id="PS50172">
    <property type="entry name" value="BRCT"/>
    <property type="match status" value="1"/>
</dbReference>
<dbReference type="PROSITE" id="PS01055">
    <property type="entry name" value="DNA_LIGASE_N1"/>
    <property type="match status" value="1"/>
</dbReference>
<dbReference type="PROSITE" id="PS01056">
    <property type="entry name" value="DNA_LIGASE_N2"/>
    <property type="match status" value="1"/>
</dbReference>
<reference key="1">
    <citation type="journal article" date="2006" name="PLoS Genet.">
        <title>The complete genome sequence and comparative genome analysis of the high pathogenicity Yersinia enterocolitica strain 8081.</title>
        <authorList>
            <person name="Thomson N.R."/>
            <person name="Howard S."/>
            <person name="Wren B.W."/>
            <person name="Holden M.T.G."/>
            <person name="Crossman L."/>
            <person name="Challis G.L."/>
            <person name="Churcher C."/>
            <person name="Mungall K."/>
            <person name="Brooks K."/>
            <person name="Chillingworth T."/>
            <person name="Feltwell T."/>
            <person name="Abdellah Z."/>
            <person name="Hauser H."/>
            <person name="Jagels K."/>
            <person name="Maddison M."/>
            <person name="Moule S."/>
            <person name="Sanders M."/>
            <person name="Whitehead S."/>
            <person name="Quail M.A."/>
            <person name="Dougan G."/>
            <person name="Parkhill J."/>
            <person name="Prentice M.B."/>
        </authorList>
    </citation>
    <scope>NUCLEOTIDE SEQUENCE [LARGE SCALE GENOMIC DNA]</scope>
    <source>
        <strain>NCTC 13174 / 8081</strain>
    </source>
</reference>
<gene>
    <name evidence="1" type="primary">ligA</name>
    <name type="ordered locus">YE1211</name>
</gene>
<feature type="chain" id="PRO_0000313522" description="DNA ligase">
    <location>
        <begin position="1"/>
        <end position="672"/>
    </location>
</feature>
<feature type="domain" description="BRCT" evidence="1">
    <location>
        <begin position="592"/>
        <end position="672"/>
    </location>
</feature>
<feature type="active site" description="N6-AMP-lysine intermediate" evidence="1">
    <location>
        <position position="115"/>
    </location>
</feature>
<feature type="binding site" evidence="1">
    <location>
        <begin position="32"/>
        <end position="36"/>
    </location>
    <ligand>
        <name>NAD(+)</name>
        <dbReference type="ChEBI" id="CHEBI:57540"/>
    </ligand>
</feature>
<feature type="binding site" evidence="1">
    <location>
        <begin position="81"/>
        <end position="82"/>
    </location>
    <ligand>
        <name>NAD(+)</name>
        <dbReference type="ChEBI" id="CHEBI:57540"/>
    </ligand>
</feature>
<feature type="binding site" evidence="1">
    <location>
        <position position="113"/>
    </location>
    <ligand>
        <name>NAD(+)</name>
        <dbReference type="ChEBI" id="CHEBI:57540"/>
    </ligand>
</feature>
<feature type="binding site" evidence="1">
    <location>
        <position position="136"/>
    </location>
    <ligand>
        <name>NAD(+)</name>
        <dbReference type="ChEBI" id="CHEBI:57540"/>
    </ligand>
</feature>
<feature type="binding site" evidence="1">
    <location>
        <position position="173"/>
    </location>
    <ligand>
        <name>NAD(+)</name>
        <dbReference type="ChEBI" id="CHEBI:57540"/>
    </ligand>
</feature>
<feature type="binding site" evidence="1">
    <location>
        <position position="290"/>
    </location>
    <ligand>
        <name>NAD(+)</name>
        <dbReference type="ChEBI" id="CHEBI:57540"/>
    </ligand>
</feature>
<feature type="binding site" evidence="1">
    <location>
        <position position="314"/>
    </location>
    <ligand>
        <name>NAD(+)</name>
        <dbReference type="ChEBI" id="CHEBI:57540"/>
    </ligand>
</feature>
<feature type="binding site" evidence="1">
    <location>
        <position position="408"/>
    </location>
    <ligand>
        <name>Zn(2+)</name>
        <dbReference type="ChEBI" id="CHEBI:29105"/>
    </ligand>
</feature>
<feature type="binding site" evidence="1">
    <location>
        <position position="411"/>
    </location>
    <ligand>
        <name>Zn(2+)</name>
        <dbReference type="ChEBI" id="CHEBI:29105"/>
    </ligand>
</feature>
<feature type="binding site" evidence="1">
    <location>
        <position position="426"/>
    </location>
    <ligand>
        <name>Zn(2+)</name>
        <dbReference type="ChEBI" id="CHEBI:29105"/>
    </ligand>
</feature>
<feature type="binding site" evidence="1">
    <location>
        <position position="432"/>
    </location>
    <ligand>
        <name>Zn(2+)</name>
        <dbReference type="ChEBI" id="CHEBI:29105"/>
    </ligand>
</feature>
<sequence length="672" mass="74042">MESIIQQINQLRTSLRHHEHLYHVLDAPEIPDAEYDRLMQQLRELEAQHPELITNDSPTQRVGAAPLDAFEQVKHEVPMLSLDNVFDEESYLAFDKRVHDRLKRADPLTFCCELKLDGLAVSLLYEDGELVRAATRGDGTTGENITANVRTIRAIPLRLQGDNIPRRVEVRGEVFMPLAGFEQLNDEARRKGGKVFANPRNAAAGSLRQLDPRITAKRPLTFFCYGVGLLEGGELPRSHIQRLMQFKAWGLPVSERVKLCTGSEQVIAFYRQVEQDRGGLGFDIDGVVIKVDSLDLQEQLGFVARAPRWATAFKFPAQEQITQVREVEFQVGRTGAITPVARLEPVQVAGVIVSNATLHNADEIERLGLRIGDTVIVRRAGDVIPQVVGVVMDQRPQDAKEITFPEHCPVCGSDIERVEGEAVARCTGGLFCAAQRKEALKHFVSRRALDVDGMGDKIIEQLVEKQYVENPADLFTLTAGKLTGLDRMGPKSAQNLIVALEKAKQTTFARFLYALGIREVGEATAANLAAHFRNLENLRAADIEALKSVPDVGEVVAKHVVNFLGEEHNQKVIEALEKVITWPEPQQIIAEEIDSPFAGKTVVLTGSLTILSRDEAKDRLAALGAKVSGSVSKKTDLVIAGEAAGSKLVKAQELGITVIDEAEMIRLLGESS</sequence>